<evidence type="ECO:0000255" key="1">
    <source>
        <dbReference type="HAMAP-Rule" id="MF_00104"/>
    </source>
</evidence>
<keyword id="KW-0963">Cytoplasm</keyword>
<keyword id="KW-0255">Endonuclease</keyword>
<keyword id="KW-0378">Hydrolase</keyword>
<keyword id="KW-0460">Magnesium</keyword>
<keyword id="KW-0479">Metal-binding</keyword>
<keyword id="KW-0507">mRNA processing</keyword>
<keyword id="KW-0540">Nuclease</keyword>
<keyword id="KW-1185">Reference proteome</keyword>
<keyword id="KW-0694">RNA-binding</keyword>
<keyword id="KW-0698">rRNA processing</keyword>
<keyword id="KW-0699">rRNA-binding</keyword>
<keyword id="KW-0819">tRNA processing</keyword>
<organism>
    <name type="scientific">Methylocella silvestris (strain DSM 15510 / CIP 108128 / LMG 27833 / NCIMB 13906 / BL2)</name>
    <dbReference type="NCBI Taxonomy" id="395965"/>
    <lineage>
        <taxon>Bacteria</taxon>
        <taxon>Pseudomonadati</taxon>
        <taxon>Pseudomonadota</taxon>
        <taxon>Alphaproteobacteria</taxon>
        <taxon>Hyphomicrobiales</taxon>
        <taxon>Beijerinckiaceae</taxon>
        <taxon>Methylocella</taxon>
    </lineage>
</organism>
<reference key="1">
    <citation type="journal article" date="2010" name="J. Bacteriol.">
        <title>Complete genome sequence of the aerobic facultative methanotroph Methylocella silvestris BL2.</title>
        <authorList>
            <person name="Chen Y."/>
            <person name="Crombie A."/>
            <person name="Rahman M.T."/>
            <person name="Dedysh S.N."/>
            <person name="Liesack W."/>
            <person name="Stott M.B."/>
            <person name="Alam M."/>
            <person name="Theisen A.R."/>
            <person name="Murrell J.C."/>
            <person name="Dunfield P.F."/>
        </authorList>
    </citation>
    <scope>NUCLEOTIDE SEQUENCE [LARGE SCALE GENOMIC DNA]</scope>
    <source>
        <strain>DSM 15510 / CIP 108128 / LMG 27833 / NCIMB 13906 / BL2</strain>
    </source>
</reference>
<sequence>MAAAPDLSALEARIGHRFSAADLIEAALTHVSAAQGKRVSYQRLEFLGDRVLGVVVANMLYGAFPDADEGELSRRLADLVRKESCAEVALEWGVEAYVRVGESEKQNASVNRAILGDVCESIIGAVFLDGGFAPAQRVVTQAFEPRMRSPRRPLRDPKTTLQEWAQARGLPPPSYRETARTGPDHAPEFTISVEIAGFQQAEARGFAKRLAEQAAAAAFLTREKIVEPGDRKGAA</sequence>
<dbReference type="EC" id="3.1.26.3" evidence="1"/>
<dbReference type="EMBL" id="CP001280">
    <property type="protein sequence ID" value="ACK49960.1"/>
    <property type="molecule type" value="Genomic_DNA"/>
</dbReference>
<dbReference type="RefSeq" id="WP_012590030.1">
    <property type="nucleotide sequence ID" value="NC_011666.1"/>
</dbReference>
<dbReference type="SMR" id="B8EK13"/>
<dbReference type="STRING" id="395965.Msil_0991"/>
<dbReference type="KEGG" id="msl:Msil_0991"/>
<dbReference type="eggNOG" id="COG0571">
    <property type="taxonomic scope" value="Bacteria"/>
</dbReference>
<dbReference type="HOGENOM" id="CLU_000907_1_1_5"/>
<dbReference type="OrthoDB" id="9805026at2"/>
<dbReference type="Proteomes" id="UP000002257">
    <property type="component" value="Chromosome"/>
</dbReference>
<dbReference type="GO" id="GO:0005737">
    <property type="term" value="C:cytoplasm"/>
    <property type="evidence" value="ECO:0007669"/>
    <property type="project" value="UniProtKB-SubCell"/>
</dbReference>
<dbReference type="GO" id="GO:0003725">
    <property type="term" value="F:double-stranded RNA binding"/>
    <property type="evidence" value="ECO:0007669"/>
    <property type="project" value="TreeGrafter"/>
</dbReference>
<dbReference type="GO" id="GO:0046872">
    <property type="term" value="F:metal ion binding"/>
    <property type="evidence" value="ECO:0007669"/>
    <property type="project" value="UniProtKB-KW"/>
</dbReference>
<dbReference type="GO" id="GO:0004525">
    <property type="term" value="F:ribonuclease III activity"/>
    <property type="evidence" value="ECO:0007669"/>
    <property type="project" value="UniProtKB-UniRule"/>
</dbReference>
<dbReference type="GO" id="GO:0019843">
    <property type="term" value="F:rRNA binding"/>
    <property type="evidence" value="ECO:0007669"/>
    <property type="project" value="UniProtKB-KW"/>
</dbReference>
<dbReference type="GO" id="GO:0006397">
    <property type="term" value="P:mRNA processing"/>
    <property type="evidence" value="ECO:0007669"/>
    <property type="project" value="UniProtKB-UniRule"/>
</dbReference>
<dbReference type="GO" id="GO:0010468">
    <property type="term" value="P:regulation of gene expression"/>
    <property type="evidence" value="ECO:0007669"/>
    <property type="project" value="TreeGrafter"/>
</dbReference>
<dbReference type="GO" id="GO:0006364">
    <property type="term" value="P:rRNA processing"/>
    <property type="evidence" value="ECO:0007669"/>
    <property type="project" value="UniProtKB-UniRule"/>
</dbReference>
<dbReference type="GO" id="GO:0008033">
    <property type="term" value="P:tRNA processing"/>
    <property type="evidence" value="ECO:0007669"/>
    <property type="project" value="UniProtKB-KW"/>
</dbReference>
<dbReference type="CDD" id="cd10845">
    <property type="entry name" value="DSRM_RNAse_III_family"/>
    <property type="match status" value="1"/>
</dbReference>
<dbReference type="CDD" id="cd00593">
    <property type="entry name" value="RIBOc"/>
    <property type="match status" value="1"/>
</dbReference>
<dbReference type="FunFam" id="1.10.1520.10:FF:000001">
    <property type="entry name" value="Ribonuclease 3"/>
    <property type="match status" value="1"/>
</dbReference>
<dbReference type="Gene3D" id="3.30.160.20">
    <property type="match status" value="1"/>
</dbReference>
<dbReference type="Gene3D" id="1.10.1520.10">
    <property type="entry name" value="Ribonuclease III domain"/>
    <property type="match status" value="1"/>
</dbReference>
<dbReference type="HAMAP" id="MF_00104">
    <property type="entry name" value="RNase_III"/>
    <property type="match status" value="1"/>
</dbReference>
<dbReference type="InterPro" id="IPR014720">
    <property type="entry name" value="dsRBD_dom"/>
</dbReference>
<dbReference type="InterPro" id="IPR011907">
    <property type="entry name" value="RNase_III"/>
</dbReference>
<dbReference type="InterPro" id="IPR000999">
    <property type="entry name" value="RNase_III_dom"/>
</dbReference>
<dbReference type="InterPro" id="IPR036389">
    <property type="entry name" value="RNase_III_sf"/>
</dbReference>
<dbReference type="NCBIfam" id="TIGR02191">
    <property type="entry name" value="RNaseIII"/>
    <property type="match status" value="1"/>
</dbReference>
<dbReference type="PANTHER" id="PTHR11207:SF0">
    <property type="entry name" value="RIBONUCLEASE 3"/>
    <property type="match status" value="1"/>
</dbReference>
<dbReference type="PANTHER" id="PTHR11207">
    <property type="entry name" value="RIBONUCLEASE III"/>
    <property type="match status" value="1"/>
</dbReference>
<dbReference type="Pfam" id="PF00035">
    <property type="entry name" value="dsrm"/>
    <property type="match status" value="1"/>
</dbReference>
<dbReference type="Pfam" id="PF14622">
    <property type="entry name" value="Ribonucleas_3_3"/>
    <property type="match status" value="1"/>
</dbReference>
<dbReference type="SMART" id="SM00358">
    <property type="entry name" value="DSRM"/>
    <property type="match status" value="1"/>
</dbReference>
<dbReference type="SMART" id="SM00535">
    <property type="entry name" value="RIBOc"/>
    <property type="match status" value="1"/>
</dbReference>
<dbReference type="SUPFAM" id="SSF54768">
    <property type="entry name" value="dsRNA-binding domain-like"/>
    <property type="match status" value="1"/>
</dbReference>
<dbReference type="SUPFAM" id="SSF69065">
    <property type="entry name" value="RNase III domain-like"/>
    <property type="match status" value="1"/>
</dbReference>
<dbReference type="PROSITE" id="PS50137">
    <property type="entry name" value="DS_RBD"/>
    <property type="match status" value="1"/>
</dbReference>
<dbReference type="PROSITE" id="PS00517">
    <property type="entry name" value="RNASE_3_1"/>
    <property type="match status" value="1"/>
</dbReference>
<dbReference type="PROSITE" id="PS50142">
    <property type="entry name" value="RNASE_3_2"/>
    <property type="match status" value="1"/>
</dbReference>
<feature type="chain" id="PRO_1000118927" description="Ribonuclease 3">
    <location>
        <begin position="1"/>
        <end position="235"/>
    </location>
</feature>
<feature type="domain" description="RNase III" evidence="1">
    <location>
        <begin position="7"/>
        <end position="131"/>
    </location>
</feature>
<feature type="domain" description="DRBM" evidence="1">
    <location>
        <begin position="156"/>
        <end position="225"/>
    </location>
</feature>
<feature type="active site" evidence="1">
    <location>
        <position position="49"/>
    </location>
</feature>
<feature type="active site" evidence="1">
    <location>
        <position position="120"/>
    </location>
</feature>
<feature type="binding site" evidence="1">
    <location>
        <position position="45"/>
    </location>
    <ligand>
        <name>Mg(2+)</name>
        <dbReference type="ChEBI" id="CHEBI:18420"/>
    </ligand>
</feature>
<feature type="binding site" evidence="1">
    <location>
        <position position="117"/>
    </location>
    <ligand>
        <name>Mg(2+)</name>
        <dbReference type="ChEBI" id="CHEBI:18420"/>
    </ligand>
</feature>
<feature type="binding site" evidence="1">
    <location>
        <position position="120"/>
    </location>
    <ligand>
        <name>Mg(2+)</name>
        <dbReference type="ChEBI" id="CHEBI:18420"/>
    </ligand>
</feature>
<gene>
    <name evidence="1" type="primary">rnc</name>
    <name type="ordered locus">Msil_0991</name>
</gene>
<proteinExistence type="inferred from homology"/>
<name>RNC_METSB</name>
<comment type="function">
    <text evidence="1">Digests double-stranded RNA. Involved in the processing of primary rRNA transcript to yield the immediate precursors to the large and small rRNAs (23S and 16S). Processes some mRNAs, and tRNAs when they are encoded in the rRNA operon. Processes pre-crRNA and tracrRNA of type II CRISPR loci if present in the organism.</text>
</comment>
<comment type="catalytic activity">
    <reaction evidence="1">
        <text>Endonucleolytic cleavage to 5'-phosphomonoester.</text>
        <dbReference type="EC" id="3.1.26.3"/>
    </reaction>
</comment>
<comment type="cofactor">
    <cofactor evidence="1">
        <name>Mg(2+)</name>
        <dbReference type="ChEBI" id="CHEBI:18420"/>
    </cofactor>
</comment>
<comment type="subunit">
    <text evidence="1">Homodimer.</text>
</comment>
<comment type="subcellular location">
    <subcellularLocation>
        <location evidence="1">Cytoplasm</location>
    </subcellularLocation>
</comment>
<comment type="similarity">
    <text evidence="1">Belongs to the ribonuclease III family.</text>
</comment>
<accession>B8EK13</accession>
<protein>
    <recommendedName>
        <fullName evidence="1">Ribonuclease 3</fullName>
        <ecNumber evidence="1">3.1.26.3</ecNumber>
    </recommendedName>
    <alternativeName>
        <fullName evidence="1">Ribonuclease III</fullName>
        <shortName evidence="1">RNase III</shortName>
    </alternativeName>
</protein>